<dbReference type="EMBL" id="DQ645459">
    <property type="protein sequence ID" value="ABG54287.1"/>
    <property type="molecule type" value="mRNA"/>
</dbReference>
<dbReference type="RefSeq" id="NP_001037656.1">
    <property type="nucleotide sequence ID" value="NM_001044191.1"/>
</dbReference>
<dbReference type="SMR" id="Q0ZB77"/>
<dbReference type="FunCoup" id="Q0ZB77">
    <property type="interactions" value="2259"/>
</dbReference>
<dbReference type="STRING" id="7091.Q0ZB77"/>
<dbReference type="PaxDb" id="7091-BGIBMGA005592-TA"/>
<dbReference type="EnsemblMetazoa" id="NM_001044191.1">
    <property type="protein sequence ID" value="NP_001037656.1"/>
    <property type="gene ID" value="GeneID_733085"/>
</dbReference>
<dbReference type="GeneID" id="733085"/>
<dbReference type="KEGG" id="bmor:733085"/>
<dbReference type="CTD" id="42789"/>
<dbReference type="eggNOG" id="KOG2479">
    <property type="taxonomic scope" value="Eukaryota"/>
</dbReference>
<dbReference type="HOGENOM" id="CLU_024521_2_0_1"/>
<dbReference type="InParanoid" id="Q0ZB77"/>
<dbReference type="OrthoDB" id="241399at7088"/>
<dbReference type="Proteomes" id="UP000005204">
    <property type="component" value="Unassembled WGS sequence"/>
</dbReference>
<dbReference type="GO" id="GO:0016282">
    <property type="term" value="C:eukaryotic 43S preinitiation complex"/>
    <property type="evidence" value="ECO:0007669"/>
    <property type="project" value="UniProtKB-UniRule"/>
</dbReference>
<dbReference type="GO" id="GO:0033290">
    <property type="term" value="C:eukaryotic 48S preinitiation complex"/>
    <property type="evidence" value="ECO:0007669"/>
    <property type="project" value="UniProtKB-UniRule"/>
</dbReference>
<dbReference type="GO" id="GO:0005852">
    <property type="term" value="C:eukaryotic translation initiation factor 3 complex"/>
    <property type="evidence" value="ECO:0007669"/>
    <property type="project" value="UniProtKB-UniRule"/>
</dbReference>
<dbReference type="GO" id="GO:0098808">
    <property type="term" value="F:mRNA cap binding"/>
    <property type="evidence" value="ECO:0007669"/>
    <property type="project" value="UniProtKB-UniRule"/>
</dbReference>
<dbReference type="GO" id="GO:0003743">
    <property type="term" value="F:translation initiation factor activity"/>
    <property type="evidence" value="ECO:0007669"/>
    <property type="project" value="UniProtKB-UniRule"/>
</dbReference>
<dbReference type="GO" id="GO:0002191">
    <property type="term" value="P:cap-dependent translational initiation"/>
    <property type="evidence" value="ECO:0007669"/>
    <property type="project" value="UniProtKB-UniRule"/>
</dbReference>
<dbReference type="GO" id="GO:0001732">
    <property type="term" value="P:formation of cytoplasmic translation initiation complex"/>
    <property type="evidence" value="ECO:0007669"/>
    <property type="project" value="UniProtKB-UniRule"/>
</dbReference>
<dbReference type="HAMAP" id="MF_03003">
    <property type="entry name" value="eIF3d"/>
    <property type="match status" value="1"/>
</dbReference>
<dbReference type="InterPro" id="IPR007783">
    <property type="entry name" value="eIF3d"/>
</dbReference>
<dbReference type="PANTHER" id="PTHR12399">
    <property type="entry name" value="EUKARYOTIC TRANSLATION INITIATION FACTOR 3 SUBUNIT 7"/>
    <property type="match status" value="1"/>
</dbReference>
<dbReference type="PANTHER" id="PTHR12399:SF0">
    <property type="entry name" value="EUKARYOTIC TRANSLATION INITIATION FACTOR 3 SUBUNIT D"/>
    <property type="match status" value="1"/>
</dbReference>
<dbReference type="Pfam" id="PF05091">
    <property type="entry name" value="eIF-3_zeta"/>
    <property type="match status" value="1"/>
</dbReference>
<dbReference type="PIRSF" id="PIRSF016281">
    <property type="entry name" value="EIF-3_zeta"/>
    <property type="match status" value="1"/>
</dbReference>
<feature type="chain" id="PRO_0000364140" description="Eukaryotic translation initiation factor 3 subunit D">
    <location>
        <begin position="1"/>
        <end position="549"/>
    </location>
</feature>
<feature type="region of interest" description="Disordered" evidence="3">
    <location>
        <begin position="101"/>
        <end position="130"/>
    </location>
</feature>
<feature type="region of interest" description="RNA gate" evidence="1">
    <location>
        <begin position="277"/>
        <end position="291"/>
    </location>
</feature>
<feature type="region of interest" description="Disordered" evidence="3">
    <location>
        <begin position="521"/>
        <end position="549"/>
    </location>
</feature>
<feature type="compositionally biased region" description="Basic residues" evidence="3">
    <location>
        <begin position="106"/>
        <end position="117"/>
    </location>
</feature>
<feature type="compositionally biased region" description="Acidic residues" evidence="3">
    <location>
        <begin position="523"/>
        <end position="533"/>
    </location>
</feature>
<accession>Q0ZB77</accession>
<gene>
    <name evidence="2" type="primary">eIF3-S7</name>
</gene>
<protein>
    <recommendedName>
        <fullName evidence="2">Eukaryotic translation initiation factor 3 subunit D</fullName>
        <shortName evidence="2">eIF3d</shortName>
    </recommendedName>
    <alternativeName>
        <fullName evidence="2">Eukaryotic translation initiation factor 3 subunit 7</fullName>
    </alternativeName>
</protein>
<reference key="1">
    <citation type="submission" date="2006-05" db="EMBL/GenBank/DDBJ databases">
        <title>Translation initiation factors in Bombyx mori.</title>
        <authorList>
            <person name="Wang L.-L."/>
            <person name="Chen K.-P."/>
            <person name="Yao Q."/>
            <person name="Hu Z.-G."/>
            <person name="Chen H.-Q."/>
        </authorList>
    </citation>
    <scope>NUCLEOTIDE SEQUENCE [MRNA]</scope>
</reference>
<proteinExistence type="evidence at transcript level"/>
<organism>
    <name type="scientific">Bombyx mori</name>
    <name type="common">Silk moth</name>
    <dbReference type="NCBI Taxonomy" id="7091"/>
    <lineage>
        <taxon>Eukaryota</taxon>
        <taxon>Metazoa</taxon>
        <taxon>Ecdysozoa</taxon>
        <taxon>Arthropoda</taxon>
        <taxon>Hexapoda</taxon>
        <taxon>Insecta</taxon>
        <taxon>Pterygota</taxon>
        <taxon>Neoptera</taxon>
        <taxon>Endopterygota</taxon>
        <taxon>Lepidoptera</taxon>
        <taxon>Glossata</taxon>
        <taxon>Ditrysia</taxon>
        <taxon>Bombycoidea</taxon>
        <taxon>Bombycidae</taxon>
        <taxon>Bombycinae</taxon>
        <taxon>Bombyx</taxon>
    </lineage>
</organism>
<comment type="function">
    <text evidence="2">mRNA cap-binding component of the eukaryotic translation initiation factor 3 (eIF-3) complex, which is involved in protein synthesis of a specialized repertoire of mRNAs and, together with other initiation factors, stimulates binding of mRNA and methionyl-tRNAi to the 40S ribosome. The eIF-3 complex specifically targets and initiates translation of a subset of mRNAs involved in cell proliferation. In the eIF-3 complex, eif3d specifically recognizes and binds the 7-methylguanosine cap of a subset of mRNAs.</text>
</comment>
<comment type="subunit">
    <text evidence="2">Component of the eukaryotic translation initiation factor 3 (eIF-3) complex.</text>
</comment>
<comment type="subcellular location">
    <subcellularLocation>
        <location evidence="2">Cytoplasm</location>
    </subcellularLocation>
</comment>
<comment type="domain">
    <text evidence="2">The RNA gate region regulates mRNA cap recognition to prevent promiscuous mRNA-binding before assembly of eif3d into the full eukaryotic translation initiation factor 3 (eIF-3) complex.</text>
</comment>
<comment type="similarity">
    <text evidence="2">Belongs to the eIF-3 subunit D family.</text>
</comment>
<evidence type="ECO:0000250" key="1">
    <source>
        <dbReference type="UniProtKB" id="K7IM66"/>
    </source>
</evidence>
<evidence type="ECO:0000255" key="2">
    <source>
        <dbReference type="HAMAP-Rule" id="MF_03003"/>
    </source>
</evidence>
<evidence type="ECO:0000256" key="3">
    <source>
        <dbReference type="SAM" id="MobiDB-lite"/>
    </source>
</evidence>
<keyword id="KW-0963">Cytoplasm</keyword>
<keyword id="KW-0396">Initiation factor</keyword>
<keyword id="KW-0648">Protein biosynthesis</keyword>
<keyword id="KW-1185">Reference proteome</keyword>
<keyword id="KW-0694">RNA-binding</keyword>
<name>EIF3D_BOMMO</name>
<sequence length="549" mass="62432">MSEHVLPAEGPMRFISPIIQDNPTGWGPYEMPDQFRDMPYQPFSKGDRLGKISDWTMVQDKKYQNKYASQFGAGSSYAYFHDEDESTFHLVDTTRVQKPYQSYQRGRARGQRGRGARGARTPGGMTTLNKPRERKLGKRWGQRGAPMKIRDASVTVRPTWVTIEDMDFPRLAKLSLPGIKEGEDIVSCGTLEYYDKAYDRVNVKHEKPLQRIDRIFHTVTTTDDPVIRRLSKTAGTVYATDAILATIMCCTRSNYSWDIVIEKIGDKLFLHKRDNTEFDLLTVNETSVEPPADDGNSINSPRNLALEATFINHNFSQQVLKSGPTEPKYKFQEPNPFVSEQEDGEVASVGYRYRKWILNNGVVLIARCEHDAVMQGPQGETQFLTIKALNEWDSKLANGVEWRQKLDTQRGAVLANELRNNSCKLAKWTVQALLAGSDQIKFGYVSRAQVRDNSRHVILGTQQFKPHEFAAQINLSMDNAWGILRCIIDICMKQKDGKYLIMKDPNKPLIRLYDIPDNTFESDASEESGDEQADTPFAPLYSYGNSKRV</sequence>